<sequence length="101" mass="11136">MSQQERLLKVLKAPHISEKATNNAEKSNTIVFKVALDANKVEIANAVAQLFEVKVDSVRTVVVKGKTKRHGAKTGRRSDWKKAYVTLAEGQELDFVEGAAE</sequence>
<reference key="1">
    <citation type="journal article" date="2004" name="Nat. Biotechnol.">
        <title>The genome sequence of the capnophilic rumen bacterium Mannheimia succiniciproducens.</title>
        <authorList>
            <person name="Hong S.H."/>
            <person name="Kim J.S."/>
            <person name="Lee S.Y."/>
            <person name="In Y.H."/>
            <person name="Choi S.S."/>
            <person name="Rih J.-K."/>
            <person name="Kim C.H."/>
            <person name="Jeong H."/>
            <person name="Hur C.G."/>
            <person name="Kim J.J."/>
        </authorList>
    </citation>
    <scope>NUCLEOTIDE SEQUENCE [LARGE SCALE GENOMIC DNA]</scope>
    <source>
        <strain>KCTC 0769BP / MBEL55E</strain>
    </source>
</reference>
<accession>Q65QV7</accession>
<name>RL23_MANSM</name>
<evidence type="ECO:0000255" key="1">
    <source>
        <dbReference type="HAMAP-Rule" id="MF_01369"/>
    </source>
</evidence>
<evidence type="ECO:0000305" key="2"/>
<proteinExistence type="inferred from homology"/>
<dbReference type="EMBL" id="AE016827">
    <property type="protein sequence ID" value="AAU38653.1"/>
    <property type="molecule type" value="Genomic_DNA"/>
</dbReference>
<dbReference type="RefSeq" id="WP_011201202.1">
    <property type="nucleotide sequence ID" value="NC_006300.1"/>
</dbReference>
<dbReference type="SMR" id="Q65QV7"/>
<dbReference type="STRING" id="221988.MS2046"/>
<dbReference type="KEGG" id="msu:MS2046"/>
<dbReference type="eggNOG" id="COG0089">
    <property type="taxonomic scope" value="Bacteria"/>
</dbReference>
<dbReference type="HOGENOM" id="CLU_037562_3_1_6"/>
<dbReference type="OrthoDB" id="9793353at2"/>
<dbReference type="Proteomes" id="UP000000607">
    <property type="component" value="Chromosome"/>
</dbReference>
<dbReference type="GO" id="GO:1990904">
    <property type="term" value="C:ribonucleoprotein complex"/>
    <property type="evidence" value="ECO:0007669"/>
    <property type="project" value="UniProtKB-KW"/>
</dbReference>
<dbReference type="GO" id="GO:0005840">
    <property type="term" value="C:ribosome"/>
    <property type="evidence" value="ECO:0007669"/>
    <property type="project" value="UniProtKB-KW"/>
</dbReference>
<dbReference type="GO" id="GO:0019843">
    <property type="term" value="F:rRNA binding"/>
    <property type="evidence" value="ECO:0007669"/>
    <property type="project" value="UniProtKB-UniRule"/>
</dbReference>
<dbReference type="GO" id="GO:0003735">
    <property type="term" value="F:structural constituent of ribosome"/>
    <property type="evidence" value="ECO:0007669"/>
    <property type="project" value="InterPro"/>
</dbReference>
<dbReference type="GO" id="GO:0006412">
    <property type="term" value="P:translation"/>
    <property type="evidence" value="ECO:0007669"/>
    <property type="project" value="UniProtKB-UniRule"/>
</dbReference>
<dbReference type="FunFam" id="3.30.70.330:FF:000001">
    <property type="entry name" value="50S ribosomal protein L23"/>
    <property type="match status" value="1"/>
</dbReference>
<dbReference type="Gene3D" id="3.30.70.330">
    <property type="match status" value="1"/>
</dbReference>
<dbReference type="HAMAP" id="MF_01369_B">
    <property type="entry name" value="Ribosomal_uL23_B"/>
    <property type="match status" value="1"/>
</dbReference>
<dbReference type="InterPro" id="IPR012677">
    <property type="entry name" value="Nucleotide-bd_a/b_plait_sf"/>
</dbReference>
<dbReference type="InterPro" id="IPR013025">
    <property type="entry name" value="Ribosomal_uL23-like"/>
</dbReference>
<dbReference type="InterPro" id="IPR012678">
    <property type="entry name" value="Ribosomal_uL23/eL15/eS24_sf"/>
</dbReference>
<dbReference type="InterPro" id="IPR001014">
    <property type="entry name" value="Ribosomal_uL23_CS"/>
</dbReference>
<dbReference type="NCBIfam" id="NF004358">
    <property type="entry name" value="PRK05738.1-1"/>
    <property type="match status" value="1"/>
</dbReference>
<dbReference type="NCBIfam" id="NF004359">
    <property type="entry name" value="PRK05738.1-3"/>
    <property type="match status" value="1"/>
</dbReference>
<dbReference type="NCBIfam" id="NF004363">
    <property type="entry name" value="PRK05738.2-4"/>
    <property type="match status" value="1"/>
</dbReference>
<dbReference type="PANTHER" id="PTHR11620">
    <property type="entry name" value="60S RIBOSOMAL PROTEIN L23A"/>
    <property type="match status" value="1"/>
</dbReference>
<dbReference type="Pfam" id="PF00276">
    <property type="entry name" value="Ribosomal_L23"/>
    <property type="match status" value="1"/>
</dbReference>
<dbReference type="SUPFAM" id="SSF54189">
    <property type="entry name" value="Ribosomal proteins S24e, L23 and L15e"/>
    <property type="match status" value="1"/>
</dbReference>
<dbReference type="PROSITE" id="PS00050">
    <property type="entry name" value="RIBOSOMAL_L23"/>
    <property type="match status" value="1"/>
</dbReference>
<comment type="function">
    <text evidence="1">One of the early assembly proteins it binds 23S rRNA. One of the proteins that surrounds the polypeptide exit tunnel on the outside of the ribosome. Forms the main docking site for trigger factor binding to the ribosome.</text>
</comment>
<comment type="subunit">
    <text evidence="1">Part of the 50S ribosomal subunit. Contacts protein L29, and trigger factor when it is bound to the ribosome.</text>
</comment>
<comment type="similarity">
    <text evidence="1">Belongs to the universal ribosomal protein uL23 family.</text>
</comment>
<organism>
    <name type="scientific">Mannheimia succiniciproducens (strain KCTC 0769BP / MBEL55E)</name>
    <dbReference type="NCBI Taxonomy" id="221988"/>
    <lineage>
        <taxon>Bacteria</taxon>
        <taxon>Pseudomonadati</taxon>
        <taxon>Pseudomonadota</taxon>
        <taxon>Gammaproteobacteria</taxon>
        <taxon>Pasteurellales</taxon>
        <taxon>Pasteurellaceae</taxon>
        <taxon>Basfia</taxon>
    </lineage>
</organism>
<protein>
    <recommendedName>
        <fullName evidence="1">Large ribosomal subunit protein uL23</fullName>
    </recommendedName>
    <alternativeName>
        <fullName evidence="2">50S ribosomal protein L23</fullName>
    </alternativeName>
</protein>
<feature type="chain" id="PRO_0000272769" description="Large ribosomal subunit protein uL23">
    <location>
        <begin position="1"/>
        <end position="101"/>
    </location>
</feature>
<gene>
    <name evidence="1" type="primary">rplW</name>
    <name type="ordered locus">MS2046</name>
</gene>
<keyword id="KW-0687">Ribonucleoprotein</keyword>
<keyword id="KW-0689">Ribosomal protein</keyword>
<keyword id="KW-0694">RNA-binding</keyword>
<keyword id="KW-0699">rRNA-binding</keyword>